<name>CYB_ARTCO</name>
<keyword id="KW-0249">Electron transport</keyword>
<keyword id="KW-0349">Heme</keyword>
<keyword id="KW-0408">Iron</keyword>
<keyword id="KW-0472">Membrane</keyword>
<keyword id="KW-0479">Metal-binding</keyword>
<keyword id="KW-0496">Mitochondrion</keyword>
<keyword id="KW-0999">Mitochondrion inner membrane</keyword>
<keyword id="KW-0679">Respiratory chain</keyword>
<keyword id="KW-0812">Transmembrane</keyword>
<keyword id="KW-1133">Transmembrane helix</keyword>
<keyword id="KW-0813">Transport</keyword>
<keyword id="KW-0830">Ubiquinone</keyword>
<protein>
    <recommendedName>
        <fullName>Cytochrome b</fullName>
    </recommendedName>
    <alternativeName>
        <fullName>Complex III subunit 3</fullName>
    </alternativeName>
    <alternativeName>
        <fullName>Complex III subunit III</fullName>
    </alternativeName>
    <alternativeName>
        <fullName>Cytochrome b-c1 complex subunit 3</fullName>
    </alternativeName>
    <alternativeName>
        <fullName>Ubiquinol-cytochrome-c reductase complex cytochrome b subunit</fullName>
    </alternativeName>
</protein>
<feature type="chain" id="PRO_0000060625" description="Cytochrome b">
    <location>
        <begin position="1"/>
        <end position="379"/>
    </location>
</feature>
<feature type="transmembrane region" description="Helical" evidence="2">
    <location>
        <begin position="33"/>
        <end position="53"/>
    </location>
</feature>
<feature type="transmembrane region" description="Helical" evidence="2">
    <location>
        <begin position="77"/>
        <end position="98"/>
    </location>
</feature>
<feature type="transmembrane region" description="Helical" evidence="2">
    <location>
        <begin position="113"/>
        <end position="133"/>
    </location>
</feature>
<feature type="transmembrane region" description="Helical" evidence="2">
    <location>
        <begin position="178"/>
        <end position="198"/>
    </location>
</feature>
<feature type="transmembrane region" description="Helical" evidence="2">
    <location>
        <begin position="226"/>
        <end position="246"/>
    </location>
</feature>
<feature type="transmembrane region" description="Helical" evidence="2">
    <location>
        <begin position="288"/>
        <end position="308"/>
    </location>
</feature>
<feature type="transmembrane region" description="Helical" evidence="2">
    <location>
        <begin position="320"/>
        <end position="340"/>
    </location>
</feature>
<feature type="transmembrane region" description="Helical" evidence="2">
    <location>
        <begin position="347"/>
        <end position="367"/>
    </location>
</feature>
<feature type="binding site" description="axial binding residue" evidence="2">
    <location>
        <position position="83"/>
    </location>
    <ligand>
        <name>heme b</name>
        <dbReference type="ChEBI" id="CHEBI:60344"/>
        <label>b562</label>
    </ligand>
    <ligandPart>
        <name>Fe</name>
        <dbReference type="ChEBI" id="CHEBI:18248"/>
    </ligandPart>
</feature>
<feature type="binding site" description="axial binding residue" evidence="2">
    <location>
        <position position="97"/>
    </location>
    <ligand>
        <name>heme b</name>
        <dbReference type="ChEBI" id="CHEBI:60344"/>
        <label>b566</label>
    </ligand>
    <ligandPart>
        <name>Fe</name>
        <dbReference type="ChEBI" id="CHEBI:18248"/>
    </ligandPart>
</feature>
<feature type="binding site" description="axial binding residue" evidence="2">
    <location>
        <position position="182"/>
    </location>
    <ligand>
        <name>heme b</name>
        <dbReference type="ChEBI" id="CHEBI:60344"/>
        <label>b562</label>
    </ligand>
    <ligandPart>
        <name>Fe</name>
        <dbReference type="ChEBI" id="CHEBI:18248"/>
    </ligandPart>
</feature>
<feature type="binding site" description="axial binding residue" evidence="2">
    <location>
        <position position="196"/>
    </location>
    <ligand>
        <name>heme b</name>
        <dbReference type="ChEBI" id="CHEBI:60344"/>
        <label>b566</label>
    </ligand>
    <ligandPart>
        <name>Fe</name>
        <dbReference type="ChEBI" id="CHEBI:18248"/>
    </ligandPart>
</feature>
<feature type="binding site" evidence="2">
    <location>
        <position position="201"/>
    </location>
    <ligand>
        <name>a ubiquinone</name>
        <dbReference type="ChEBI" id="CHEBI:16389"/>
    </ligand>
</feature>
<feature type="sequence variant" description="In strain: Isolate TK 11240.">
    <original>I</original>
    <variation>V</variation>
    <location>
        <position position="234"/>
    </location>
</feature>
<feature type="sequence variant" description="In strain: Isolate TK 11240.">
    <original>P</original>
    <variation>Q</variation>
    <location>
        <position position="322"/>
    </location>
</feature>
<reference key="1">
    <citation type="submission" date="1996-08" db="EMBL/GenBank/DDBJ databases">
        <title>Phylogenetic accuracy, stability, and congruence: relationships within and among the New World bat genera Artibeus, Dermanura, and Koopmania.</title>
        <authorList>
            <person name="den Bussche R.A."/>
            <person name="Hudgeons J.L."/>
            <person name="Baker R.J."/>
        </authorList>
    </citation>
    <scope>NUCLEOTIDE SEQUENCE [GENOMIC DNA]</scope>
    <source>
        <strain>Isolate TK 10378</strain>
        <strain>Isolate TK 11240</strain>
    </source>
</reference>
<reference key="2">
    <citation type="journal article" date="1993" name="Mol. Biol. Evol.">
        <title>Molecular phylogenetics of Stenodermatini bat genera: congruence of data from nuclear and mitochondrial DNA.</title>
        <authorList>
            <person name="den Bussche R.A."/>
            <person name="Baker R.J."/>
            <person name="Wichman H.A."/>
            <person name="Hamilton M.J."/>
        </authorList>
    </citation>
    <scope>NUCLEOTIDE SEQUENCE [GENOMIC DNA] OF 1-134</scope>
    <source>
        <strain>Isolate TK 10378</strain>
        <strain>Isolate TK 11240</strain>
        <tissue>Muscle</tissue>
    </source>
</reference>
<comment type="function">
    <text evidence="2">Component of the ubiquinol-cytochrome c reductase complex (complex III or cytochrome b-c1 complex) that is part of the mitochondrial respiratory chain. The b-c1 complex mediates electron transfer from ubiquinol to cytochrome c. Contributes to the generation of a proton gradient across the mitochondrial membrane that is then used for ATP synthesis.</text>
</comment>
<comment type="cofactor">
    <cofactor evidence="2">
        <name>heme b</name>
        <dbReference type="ChEBI" id="CHEBI:60344"/>
    </cofactor>
    <text evidence="2">Binds 2 heme b groups non-covalently.</text>
</comment>
<comment type="subunit">
    <text evidence="2">The cytochrome bc1 complex contains 11 subunits: 3 respiratory subunits (MT-CYB, CYC1 and UQCRFS1), 2 core proteins (UQCRC1 and UQCRC2) and 6 low-molecular weight proteins (UQCRH/QCR6, UQCRB/QCR7, UQCRQ/QCR8, UQCR10/QCR9, UQCR11/QCR10 and a cleavage product of UQCRFS1). This cytochrome bc1 complex then forms a dimer.</text>
</comment>
<comment type="subcellular location">
    <subcellularLocation>
        <location evidence="2">Mitochondrion inner membrane</location>
        <topology evidence="2">Multi-pass membrane protein</topology>
    </subcellularLocation>
</comment>
<comment type="miscellaneous">
    <text evidence="1">Heme 1 (or BL or b562) is low-potential and absorbs at about 562 nm, and heme 2 (or BH or b566) is high-potential and absorbs at about 566 nm.</text>
</comment>
<comment type="similarity">
    <text evidence="3 4">Belongs to the cytochrome b family.</text>
</comment>
<comment type="caution">
    <text evidence="2">The full-length protein contains only eight transmembrane helices, not nine as predicted by bioinformatics tools.</text>
</comment>
<sequence>MTNIRKTHPLLKIINSSFVDLPAPSSLSTWWNFGSLLGVCLGVQILTGLFLAMHYTSDTATAFNSVTHICRDVNYGWLLRYLHANGASMFFICLYLHVGRGLYYGSYMYSETWNIGILLLFAVMATAFMGYVLPWGQMSFWGATVITNLLSAIPYIGTDLVQWIWGGFSVDKATLTRFFAFHFLLPFIVTALVMVHLLFLHETGSNNPTGIPSDPDMIPFHPYYTIKDILGFLIMLTALATLVLFSPDLLGDPDNYIPANPSITPPHIKPEWYFLFAYAILRSIPNKLGGVLALVMSILILAIVPILHTSKQRSMMFRPLSPCLFWLLVAVLFTLTWIGGQPVEHPYIIIGQTASVLYFLIILLLMPMISMVENYLLKW</sequence>
<geneLocation type="mitochondrion"/>
<accession>Q95723</accession>
<accession>Q36919</accession>
<accession>Q95725</accession>
<gene>
    <name type="primary">MT-CYB</name>
    <name type="synonym">COB</name>
    <name type="synonym">CYTB</name>
    <name type="synonym">MTCYB</name>
</gene>
<evidence type="ECO:0000250" key="1"/>
<evidence type="ECO:0000250" key="2">
    <source>
        <dbReference type="UniProtKB" id="P00157"/>
    </source>
</evidence>
<evidence type="ECO:0000255" key="3">
    <source>
        <dbReference type="PROSITE-ProRule" id="PRU00967"/>
    </source>
</evidence>
<evidence type="ECO:0000255" key="4">
    <source>
        <dbReference type="PROSITE-ProRule" id="PRU00968"/>
    </source>
</evidence>
<dbReference type="EMBL" id="U66518">
    <property type="protein sequence ID" value="AAB06767.1"/>
    <property type="molecule type" value="Genomic_DNA"/>
</dbReference>
<dbReference type="EMBL" id="U66519">
    <property type="protein sequence ID" value="AAB06768.1"/>
    <property type="molecule type" value="Genomic_DNA"/>
</dbReference>
<dbReference type="EMBL" id="L19515">
    <property type="protein sequence ID" value="AAA31870.1"/>
    <property type="molecule type" value="Genomic_DNA"/>
</dbReference>
<dbReference type="EMBL" id="L19516">
    <property type="protein sequence ID" value="AAA31871.1"/>
    <property type="molecule type" value="Genomic_DNA"/>
</dbReference>
<dbReference type="SMR" id="Q95723"/>
<dbReference type="GO" id="GO:0005743">
    <property type="term" value="C:mitochondrial inner membrane"/>
    <property type="evidence" value="ECO:0007669"/>
    <property type="project" value="UniProtKB-SubCell"/>
</dbReference>
<dbReference type="GO" id="GO:0045275">
    <property type="term" value="C:respiratory chain complex III"/>
    <property type="evidence" value="ECO:0007669"/>
    <property type="project" value="InterPro"/>
</dbReference>
<dbReference type="GO" id="GO:0046872">
    <property type="term" value="F:metal ion binding"/>
    <property type="evidence" value="ECO:0007669"/>
    <property type="project" value="UniProtKB-KW"/>
</dbReference>
<dbReference type="GO" id="GO:0008121">
    <property type="term" value="F:ubiquinol-cytochrome-c reductase activity"/>
    <property type="evidence" value="ECO:0007669"/>
    <property type="project" value="InterPro"/>
</dbReference>
<dbReference type="GO" id="GO:0006122">
    <property type="term" value="P:mitochondrial electron transport, ubiquinol to cytochrome c"/>
    <property type="evidence" value="ECO:0007669"/>
    <property type="project" value="TreeGrafter"/>
</dbReference>
<dbReference type="CDD" id="cd00290">
    <property type="entry name" value="cytochrome_b_C"/>
    <property type="match status" value="1"/>
</dbReference>
<dbReference type="CDD" id="cd00284">
    <property type="entry name" value="Cytochrome_b_N"/>
    <property type="match status" value="1"/>
</dbReference>
<dbReference type="FunFam" id="1.20.810.10:FF:000002">
    <property type="entry name" value="Cytochrome b"/>
    <property type="match status" value="1"/>
</dbReference>
<dbReference type="Gene3D" id="1.20.810.10">
    <property type="entry name" value="Cytochrome Bc1 Complex, Chain C"/>
    <property type="match status" value="1"/>
</dbReference>
<dbReference type="InterPro" id="IPR005798">
    <property type="entry name" value="Cyt_b/b6_C"/>
</dbReference>
<dbReference type="InterPro" id="IPR036150">
    <property type="entry name" value="Cyt_b/b6_C_sf"/>
</dbReference>
<dbReference type="InterPro" id="IPR005797">
    <property type="entry name" value="Cyt_b/b6_N"/>
</dbReference>
<dbReference type="InterPro" id="IPR027387">
    <property type="entry name" value="Cytb/b6-like_sf"/>
</dbReference>
<dbReference type="InterPro" id="IPR030689">
    <property type="entry name" value="Cytochrome_b"/>
</dbReference>
<dbReference type="InterPro" id="IPR048260">
    <property type="entry name" value="Cytochrome_b_C_euk/bac"/>
</dbReference>
<dbReference type="InterPro" id="IPR048259">
    <property type="entry name" value="Cytochrome_b_N_euk/bac"/>
</dbReference>
<dbReference type="InterPro" id="IPR016174">
    <property type="entry name" value="Di-haem_cyt_TM"/>
</dbReference>
<dbReference type="PANTHER" id="PTHR19271">
    <property type="entry name" value="CYTOCHROME B"/>
    <property type="match status" value="1"/>
</dbReference>
<dbReference type="PANTHER" id="PTHR19271:SF16">
    <property type="entry name" value="CYTOCHROME B"/>
    <property type="match status" value="1"/>
</dbReference>
<dbReference type="Pfam" id="PF00032">
    <property type="entry name" value="Cytochrom_B_C"/>
    <property type="match status" value="1"/>
</dbReference>
<dbReference type="Pfam" id="PF00033">
    <property type="entry name" value="Cytochrome_B"/>
    <property type="match status" value="1"/>
</dbReference>
<dbReference type="PIRSF" id="PIRSF038885">
    <property type="entry name" value="COB"/>
    <property type="match status" value="1"/>
</dbReference>
<dbReference type="SUPFAM" id="SSF81648">
    <property type="entry name" value="a domain/subunit of cytochrome bc1 complex (Ubiquinol-cytochrome c reductase)"/>
    <property type="match status" value="1"/>
</dbReference>
<dbReference type="SUPFAM" id="SSF81342">
    <property type="entry name" value="Transmembrane di-heme cytochromes"/>
    <property type="match status" value="1"/>
</dbReference>
<dbReference type="PROSITE" id="PS51003">
    <property type="entry name" value="CYTB_CTER"/>
    <property type="match status" value="1"/>
</dbReference>
<dbReference type="PROSITE" id="PS51002">
    <property type="entry name" value="CYTB_NTER"/>
    <property type="match status" value="1"/>
</dbReference>
<proteinExistence type="inferred from homology"/>
<organism>
    <name type="scientific">Artibeus concolor</name>
    <name type="common">Brown fruit-eating bat</name>
    <name type="synonym">Koopmania concolor</name>
    <dbReference type="NCBI Taxonomy" id="40225"/>
    <lineage>
        <taxon>Eukaryota</taxon>
        <taxon>Metazoa</taxon>
        <taxon>Chordata</taxon>
        <taxon>Craniata</taxon>
        <taxon>Vertebrata</taxon>
        <taxon>Euteleostomi</taxon>
        <taxon>Mammalia</taxon>
        <taxon>Eutheria</taxon>
        <taxon>Laurasiatheria</taxon>
        <taxon>Chiroptera</taxon>
        <taxon>Yangochiroptera</taxon>
        <taxon>Phyllostomidae</taxon>
        <taxon>Stenodermatinae</taxon>
        <taxon>Artibeus</taxon>
    </lineage>
</organism>